<gene>
    <name evidence="1" type="primary">rhlB</name>
    <name type="ordered locus">YPTS_0177</name>
</gene>
<evidence type="ECO:0000255" key="1">
    <source>
        <dbReference type="HAMAP-Rule" id="MF_00661"/>
    </source>
</evidence>
<evidence type="ECO:0000256" key="2">
    <source>
        <dbReference type="SAM" id="MobiDB-lite"/>
    </source>
</evidence>
<organism>
    <name type="scientific">Yersinia pseudotuberculosis serotype IB (strain PB1/+)</name>
    <dbReference type="NCBI Taxonomy" id="502801"/>
    <lineage>
        <taxon>Bacteria</taxon>
        <taxon>Pseudomonadati</taxon>
        <taxon>Pseudomonadota</taxon>
        <taxon>Gammaproteobacteria</taxon>
        <taxon>Enterobacterales</taxon>
        <taxon>Yersiniaceae</taxon>
        <taxon>Yersinia</taxon>
    </lineage>
</organism>
<sequence>MSKTHLTEQKFSDFALHPLVVEALENKGFQYCTPIQALALPLTLSGRDVAGQAQTGTGKTLAFLASTFHYLLSHPAEEGRQTNQPRALIMAPTRELAVQIHSDAESLSQVTGLKLGLAYGGDGYDKQLKVLESGVDILIGTTGRLIDYAKQNYINLGAIQVVVLDEADRMYDLGFIKDIRWLFRRMPSVDKRLNMLFSATLSYRVRELAFEQMNNAEYVEVEPLQKTGHRIKEELFYPSNEEKMRLLQTLIEEEWPDRCIIFANTKHRCEEIWGHLAADGHRVGLLTGDVAQKKRLRILEDFTKGDLDILVATDVAARGLHIPLVTHVFNYDLPDDCEDYVHRIGRTGRAGESGHSISLACEEYALNLPAIETYTGHSIPVSKYNSDALLTDLPAPKRLARTRTGNGPRRNSAPRRSGAPRNNRKRPG</sequence>
<keyword id="KW-0067">ATP-binding</keyword>
<keyword id="KW-0963">Cytoplasm</keyword>
<keyword id="KW-0347">Helicase</keyword>
<keyword id="KW-0378">Hydrolase</keyword>
<keyword id="KW-0547">Nucleotide-binding</keyword>
<keyword id="KW-0694">RNA-binding</keyword>
<feature type="chain" id="PRO_1000131314" description="ATP-dependent RNA helicase RhlB">
    <location>
        <begin position="1"/>
        <end position="428"/>
    </location>
</feature>
<feature type="domain" description="Helicase ATP-binding" evidence="1">
    <location>
        <begin position="40"/>
        <end position="219"/>
    </location>
</feature>
<feature type="domain" description="Helicase C-terminal" evidence="1">
    <location>
        <begin position="245"/>
        <end position="390"/>
    </location>
</feature>
<feature type="region of interest" description="Disordered" evidence="2">
    <location>
        <begin position="394"/>
        <end position="428"/>
    </location>
</feature>
<feature type="short sequence motif" description="Q motif">
    <location>
        <begin position="9"/>
        <end position="37"/>
    </location>
</feature>
<feature type="short sequence motif" description="DEAD box">
    <location>
        <begin position="165"/>
        <end position="168"/>
    </location>
</feature>
<feature type="binding site" evidence="1">
    <location>
        <begin position="53"/>
        <end position="60"/>
    </location>
    <ligand>
        <name>ATP</name>
        <dbReference type="ChEBI" id="CHEBI:30616"/>
    </ligand>
</feature>
<name>RHLB_YERPB</name>
<accession>B2K046</accession>
<protein>
    <recommendedName>
        <fullName evidence="1">ATP-dependent RNA helicase RhlB</fullName>
        <ecNumber evidence="1">3.6.4.13</ecNumber>
    </recommendedName>
</protein>
<proteinExistence type="inferred from homology"/>
<reference key="1">
    <citation type="submission" date="2008-04" db="EMBL/GenBank/DDBJ databases">
        <title>Complete sequence of Yersinia pseudotuberculosis PB1/+.</title>
        <authorList>
            <person name="Copeland A."/>
            <person name="Lucas S."/>
            <person name="Lapidus A."/>
            <person name="Glavina del Rio T."/>
            <person name="Dalin E."/>
            <person name="Tice H."/>
            <person name="Bruce D."/>
            <person name="Goodwin L."/>
            <person name="Pitluck S."/>
            <person name="Munk A.C."/>
            <person name="Brettin T."/>
            <person name="Detter J.C."/>
            <person name="Han C."/>
            <person name="Tapia R."/>
            <person name="Schmutz J."/>
            <person name="Larimer F."/>
            <person name="Land M."/>
            <person name="Hauser L."/>
            <person name="Challacombe J.F."/>
            <person name="Green L."/>
            <person name="Lindler L.E."/>
            <person name="Nikolich M.P."/>
            <person name="Richardson P."/>
        </authorList>
    </citation>
    <scope>NUCLEOTIDE SEQUENCE [LARGE SCALE GENOMIC DNA]</scope>
    <source>
        <strain>PB1/+</strain>
    </source>
</reference>
<comment type="function">
    <text evidence="1">DEAD-box RNA helicase involved in RNA degradation. Has RNA-dependent ATPase activity and unwinds double-stranded RNA.</text>
</comment>
<comment type="catalytic activity">
    <reaction evidence="1">
        <text>ATP + H2O = ADP + phosphate + H(+)</text>
        <dbReference type="Rhea" id="RHEA:13065"/>
        <dbReference type="ChEBI" id="CHEBI:15377"/>
        <dbReference type="ChEBI" id="CHEBI:15378"/>
        <dbReference type="ChEBI" id="CHEBI:30616"/>
        <dbReference type="ChEBI" id="CHEBI:43474"/>
        <dbReference type="ChEBI" id="CHEBI:456216"/>
        <dbReference type="EC" id="3.6.4.13"/>
    </reaction>
</comment>
<comment type="subunit">
    <text evidence="1">Component of the RNA degradosome, which is a multiprotein complex involved in RNA processing and mRNA degradation.</text>
</comment>
<comment type="subcellular location">
    <subcellularLocation>
        <location evidence="1">Cytoplasm</location>
    </subcellularLocation>
</comment>
<comment type="similarity">
    <text evidence="1">Belongs to the DEAD box helicase family. RhlB subfamily.</text>
</comment>
<dbReference type="EC" id="3.6.4.13" evidence="1"/>
<dbReference type="EMBL" id="CP001048">
    <property type="protein sequence ID" value="ACC87174.1"/>
    <property type="molecule type" value="Genomic_DNA"/>
</dbReference>
<dbReference type="RefSeq" id="WP_002228177.1">
    <property type="nucleotide sequence ID" value="NZ_CP009780.1"/>
</dbReference>
<dbReference type="SMR" id="B2K046"/>
<dbReference type="GeneID" id="96663646"/>
<dbReference type="KEGG" id="ypb:YPTS_0177"/>
<dbReference type="PATRIC" id="fig|502801.10.peg.3854"/>
<dbReference type="GO" id="GO:0005829">
    <property type="term" value="C:cytosol"/>
    <property type="evidence" value="ECO:0007669"/>
    <property type="project" value="TreeGrafter"/>
</dbReference>
<dbReference type="GO" id="GO:0005524">
    <property type="term" value="F:ATP binding"/>
    <property type="evidence" value="ECO:0007669"/>
    <property type="project" value="UniProtKB-UniRule"/>
</dbReference>
<dbReference type="GO" id="GO:0016887">
    <property type="term" value="F:ATP hydrolysis activity"/>
    <property type="evidence" value="ECO:0007669"/>
    <property type="project" value="RHEA"/>
</dbReference>
<dbReference type="GO" id="GO:0003723">
    <property type="term" value="F:RNA binding"/>
    <property type="evidence" value="ECO:0007669"/>
    <property type="project" value="UniProtKB-UniRule"/>
</dbReference>
<dbReference type="GO" id="GO:0003724">
    <property type="term" value="F:RNA helicase activity"/>
    <property type="evidence" value="ECO:0007669"/>
    <property type="project" value="UniProtKB-UniRule"/>
</dbReference>
<dbReference type="GO" id="GO:0006401">
    <property type="term" value="P:RNA catabolic process"/>
    <property type="evidence" value="ECO:0007669"/>
    <property type="project" value="UniProtKB-UniRule"/>
</dbReference>
<dbReference type="CDD" id="cd00268">
    <property type="entry name" value="DEADc"/>
    <property type="match status" value="1"/>
</dbReference>
<dbReference type="CDD" id="cd18787">
    <property type="entry name" value="SF2_C_DEAD"/>
    <property type="match status" value="1"/>
</dbReference>
<dbReference type="FunFam" id="3.40.50.300:FF:000312">
    <property type="entry name" value="ATP-dependent RNA helicase RhlB"/>
    <property type="match status" value="1"/>
</dbReference>
<dbReference type="Gene3D" id="3.40.50.300">
    <property type="entry name" value="P-loop containing nucleotide triphosphate hydrolases"/>
    <property type="match status" value="2"/>
</dbReference>
<dbReference type="HAMAP" id="MF_00661">
    <property type="entry name" value="DEAD_helicase_RhlB"/>
    <property type="match status" value="1"/>
</dbReference>
<dbReference type="InterPro" id="IPR011545">
    <property type="entry name" value="DEAD/DEAH_box_helicase_dom"/>
</dbReference>
<dbReference type="InterPro" id="IPR050079">
    <property type="entry name" value="DEAD_box_RNA_helicase"/>
</dbReference>
<dbReference type="InterPro" id="IPR014001">
    <property type="entry name" value="Helicase_ATP-bd"/>
</dbReference>
<dbReference type="InterPro" id="IPR001650">
    <property type="entry name" value="Helicase_C-like"/>
</dbReference>
<dbReference type="InterPro" id="IPR027417">
    <property type="entry name" value="P-loop_NTPase"/>
</dbReference>
<dbReference type="InterPro" id="IPR000629">
    <property type="entry name" value="RNA-helicase_DEAD-box_CS"/>
</dbReference>
<dbReference type="InterPro" id="IPR023554">
    <property type="entry name" value="RNA_helicase_ATP-dep_RhlB"/>
</dbReference>
<dbReference type="InterPro" id="IPR014014">
    <property type="entry name" value="RNA_helicase_DEAD_Q_motif"/>
</dbReference>
<dbReference type="NCBIfam" id="NF003419">
    <property type="entry name" value="PRK04837.1"/>
    <property type="match status" value="1"/>
</dbReference>
<dbReference type="PANTHER" id="PTHR47959:SF10">
    <property type="entry name" value="ATP-DEPENDENT RNA HELICASE RHLB"/>
    <property type="match status" value="1"/>
</dbReference>
<dbReference type="PANTHER" id="PTHR47959">
    <property type="entry name" value="ATP-DEPENDENT RNA HELICASE RHLE-RELATED"/>
    <property type="match status" value="1"/>
</dbReference>
<dbReference type="Pfam" id="PF00270">
    <property type="entry name" value="DEAD"/>
    <property type="match status" value="1"/>
</dbReference>
<dbReference type="Pfam" id="PF00271">
    <property type="entry name" value="Helicase_C"/>
    <property type="match status" value="1"/>
</dbReference>
<dbReference type="SMART" id="SM00487">
    <property type="entry name" value="DEXDc"/>
    <property type="match status" value="1"/>
</dbReference>
<dbReference type="SMART" id="SM00490">
    <property type="entry name" value="HELICc"/>
    <property type="match status" value="1"/>
</dbReference>
<dbReference type="SUPFAM" id="SSF52540">
    <property type="entry name" value="P-loop containing nucleoside triphosphate hydrolases"/>
    <property type="match status" value="1"/>
</dbReference>
<dbReference type="PROSITE" id="PS00039">
    <property type="entry name" value="DEAD_ATP_HELICASE"/>
    <property type="match status" value="1"/>
</dbReference>
<dbReference type="PROSITE" id="PS51192">
    <property type="entry name" value="HELICASE_ATP_BIND_1"/>
    <property type="match status" value="1"/>
</dbReference>
<dbReference type="PROSITE" id="PS51194">
    <property type="entry name" value="HELICASE_CTER"/>
    <property type="match status" value="1"/>
</dbReference>
<dbReference type="PROSITE" id="PS51195">
    <property type="entry name" value="Q_MOTIF"/>
    <property type="match status" value="1"/>
</dbReference>